<sequence>MEKQFNVWSVQNDIVCQRQLTINLRRVRNEYDNAVASVAAPSCPPSIPAQTRTCGRKLKLDWFKCTIL</sequence>
<organism>
    <name type="scientific">Invertebrate iridescent virus 3</name>
    <name type="common">IIV-3</name>
    <name type="synonym">Mosquito iridescent virus</name>
    <dbReference type="NCBI Taxonomy" id="345201"/>
    <lineage>
        <taxon>Viruses</taxon>
        <taxon>Varidnaviria</taxon>
        <taxon>Bamfordvirae</taxon>
        <taxon>Nucleocytoviricota</taxon>
        <taxon>Megaviricetes</taxon>
        <taxon>Pimascovirales</taxon>
        <taxon>Iridoviridae</taxon>
        <taxon>Betairidovirinae</taxon>
        <taxon>Chloriridovirus</taxon>
    </lineage>
</organism>
<organismHost>
    <name type="scientific">Aedes vexans</name>
    <name type="common">Inland floodwater mosquito</name>
    <name type="synonym">Culex vexans</name>
    <dbReference type="NCBI Taxonomy" id="7163"/>
</organismHost>
<organismHost>
    <name type="scientific">Culex territans</name>
    <dbReference type="NCBI Taxonomy" id="42431"/>
</organismHost>
<organismHost>
    <name type="scientific">Culiseta annulata</name>
    <dbReference type="NCBI Taxonomy" id="332058"/>
</organismHost>
<organismHost>
    <name type="scientific">Ochlerotatus sollicitans</name>
    <name type="common">eastern saltmarsh mosquito</name>
    <dbReference type="NCBI Taxonomy" id="310513"/>
</organismHost>
<organismHost>
    <name type="scientific">Ochlerotatus taeniorhynchus</name>
    <name type="common">Black salt marsh mosquito</name>
    <name type="synonym">Aedes taeniorhynchus</name>
    <dbReference type="NCBI Taxonomy" id="329105"/>
</organismHost>
<organismHost>
    <name type="scientific">Psorophora ferox</name>
    <dbReference type="NCBI Taxonomy" id="7183"/>
</organismHost>
<gene>
    <name type="ORF">IIV3-117L</name>
</gene>
<proteinExistence type="predicted"/>
<reference key="1">
    <citation type="journal article" date="2006" name="J. Virol.">
        <title>Genome of invertebrate iridescent virus type 3 (mosquito iridescent virus).</title>
        <authorList>
            <person name="Delhon G."/>
            <person name="Tulman E.R."/>
            <person name="Afonso C.L."/>
            <person name="Lu Z."/>
            <person name="Becnel J.J."/>
            <person name="Moser B.A."/>
            <person name="Kutish G.F."/>
            <person name="Rock D.L."/>
        </authorList>
    </citation>
    <scope>NUCLEOTIDE SEQUENCE [LARGE SCALE GENOMIC DNA]</scope>
</reference>
<dbReference type="EMBL" id="DQ643392">
    <property type="protein sequence ID" value="ABF82147.1"/>
    <property type="molecule type" value="Genomic_DNA"/>
</dbReference>
<dbReference type="RefSeq" id="YP_654689.1">
    <property type="nucleotide sequence ID" value="NC_008187.1"/>
</dbReference>
<dbReference type="KEGG" id="vg:4156328"/>
<dbReference type="Proteomes" id="UP000001358">
    <property type="component" value="Genome"/>
</dbReference>
<keyword id="KW-1185">Reference proteome</keyword>
<name>117L_IIV3</name>
<feature type="chain" id="PRO_0000377816" description="Uncharacterized protein 117L">
    <location>
        <begin position="1"/>
        <end position="68"/>
    </location>
</feature>
<accession>Q196U3</accession>
<protein>
    <recommendedName>
        <fullName>Uncharacterized protein 117L</fullName>
    </recommendedName>
</protein>